<feature type="chain" id="PRO_0000074864" description="Sensor protein RprX">
    <location>
        <begin position="1"/>
        <end position="519"/>
    </location>
</feature>
<feature type="transmembrane region" description="Helical" evidence="2">
    <location>
        <begin position="5"/>
        <end position="25"/>
    </location>
</feature>
<feature type="transmembrane region" description="Helical" evidence="2">
    <location>
        <begin position="260"/>
        <end position="280"/>
    </location>
</feature>
<feature type="domain" description="Histidine kinase" evidence="3">
    <location>
        <begin position="296"/>
        <end position="517"/>
    </location>
</feature>
<feature type="modified residue" description="Phosphohistidine; by autocatalysis" evidence="3">
    <location>
        <position position="299"/>
    </location>
</feature>
<feature type="sequence conflict" description="In Ref. 1; AAB26173." evidence="4" ref="1">
    <original>L</original>
    <variation>W</variation>
    <location>
        <position position="20"/>
    </location>
</feature>
<feature type="sequence conflict" description="In Ref. 1; AAB26173." evidence="4" ref="1">
    <original>K</original>
    <variation>R</variation>
    <location>
        <position position="33"/>
    </location>
</feature>
<feature type="sequence conflict" description="In Ref. 1; AAB26173." evidence="4" ref="1">
    <original>L</original>
    <variation>S</variation>
    <location>
        <position position="156"/>
    </location>
</feature>
<feature type="sequence conflict" description="In Ref. 1; AAB26173." evidence="4" ref="1">
    <original>V</original>
    <variation>I</variation>
    <location>
        <position position="194"/>
    </location>
</feature>
<feature type="sequence conflict" description="In Ref. 1; AAB26173." evidence="4" ref="1">
    <original>D</original>
    <variation>E</variation>
    <location>
        <position position="218"/>
    </location>
</feature>
<feature type="sequence conflict" description="In Ref. 1; AAB26173." evidence="4" ref="1">
    <original>K</original>
    <variation>N</variation>
    <location>
        <position position="248"/>
    </location>
</feature>
<feature type="sequence conflict" description="In Ref. 1; AAB26173." evidence="4" ref="1">
    <original>I</original>
    <variation>F</variation>
    <location>
        <position position="267"/>
    </location>
</feature>
<feature type="sequence conflict" description="In Ref. 1; AAB26173." evidence="4" ref="1">
    <original>V</original>
    <variation>F</variation>
    <location>
        <position position="320"/>
    </location>
</feature>
<feature type="sequence conflict" description="In Ref. 1; AAB26173." evidence="4" ref="1">
    <original>T</original>
    <variation>S</variation>
    <location>
        <position position="373"/>
    </location>
</feature>
<feature type="sequence conflict" description="In Ref. 1; AAB26173." evidence="4" ref="1">
    <original>I</original>
    <variation>M</variation>
    <location>
        <position position="408"/>
    </location>
</feature>
<feature type="sequence conflict" description="In Ref. 1; AAB26173." evidence="4" ref="1">
    <original>N</original>
    <variation>D</variation>
    <location>
        <position position="432"/>
    </location>
</feature>
<feature type="sequence conflict" description="In Ref. 1; AAB26173." evidence="4" ref="1">
    <original>V</original>
    <variation>C</variation>
    <location>
        <position position="468"/>
    </location>
</feature>
<feature type="sequence conflict" description="In Ref. 1; AAB26173." evidence="4" ref="1">
    <original>N</original>
    <variation>I</variation>
    <location>
        <position position="504"/>
    </location>
</feature>
<accession>Q08408</accession>
<accession>Q64PH4</accession>
<name>RPRX_BACFR</name>
<comment type="function">
    <text>Member of the two-component regulatory system RprX/RprY. May activate RprY by phosphorylation.</text>
</comment>
<comment type="catalytic activity">
    <reaction>
        <text>ATP + protein L-histidine = ADP + protein N-phospho-L-histidine.</text>
        <dbReference type="EC" id="2.7.13.3"/>
    </reaction>
</comment>
<comment type="subcellular location">
    <subcellularLocation>
        <location evidence="1">Cell membrane</location>
        <topology evidence="1">Multi-pass membrane protein</topology>
    </subcellularLocation>
</comment>
<evidence type="ECO:0000250" key="1"/>
<evidence type="ECO:0000255" key="2"/>
<evidence type="ECO:0000255" key="3">
    <source>
        <dbReference type="PROSITE-ProRule" id="PRU00107"/>
    </source>
</evidence>
<evidence type="ECO:0000305" key="4"/>
<reference evidence="4" key="1">
    <citation type="journal article" date="1993" name="Mol. Microbiol.">
        <title>Cloning and identification of a two-component signal-transducing regulatory system from Bacteroides fragilis.</title>
        <authorList>
            <person name="Rasmussen B.A."/>
            <person name="Kovacs E."/>
        </authorList>
    </citation>
    <scope>NUCLEOTIDE SEQUENCE [GENOMIC DNA]</scope>
</reference>
<reference key="2">
    <citation type="journal article" date="2004" name="Proc. Natl. Acad. Sci. U.S.A.">
        <title>Genomic analysis of Bacteroides fragilis reveals extensive DNA inversions regulating cell surface adaptation.</title>
        <authorList>
            <person name="Kuwahara T."/>
            <person name="Yamashita A."/>
            <person name="Hirakawa H."/>
            <person name="Nakayama H."/>
            <person name="Toh H."/>
            <person name="Okada N."/>
            <person name="Kuhara S."/>
            <person name="Hattori M."/>
            <person name="Hayashi T."/>
            <person name="Ohnishi Y."/>
        </authorList>
    </citation>
    <scope>NUCLEOTIDE SEQUENCE [LARGE SCALE GENOMIC DNA]</scope>
    <source>
        <strain>YCH46</strain>
    </source>
</reference>
<protein>
    <recommendedName>
        <fullName>Sensor protein RprX</fullName>
        <ecNumber>2.7.13.3</ecNumber>
    </recommendedName>
</protein>
<proteinExistence type="inferred from homology"/>
<keyword id="KW-0067">ATP-binding</keyword>
<keyword id="KW-1003">Cell membrane</keyword>
<keyword id="KW-0418">Kinase</keyword>
<keyword id="KW-0472">Membrane</keyword>
<keyword id="KW-0547">Nucleotide-binding</keyword>
<keyword id="KW-0597">Phosphoprotein</keyword>
<keyword id="KW-0808">Transferase</keyword>
<keyword id="KW-0812">Transmembrane</keyword>
<keyword id="KW-1133">Transmembrane helix</keyword>
<keyword id="KW-0902">Two-component regulatory system</keyword>
<gene>
    <name type="primary">rprX</name>
    <name type="ordered locus">BF3865</name>
</gene>
<organism>
    <name type="scientific">Bacteroides fragilis (strain YCH46)</name>
    <dbReference type="NCBI Taxonomy" id="295405"/>
    <lineage>
        <taxon>Bacteria</taxon>
        <taxon>Pseudomonadati</taxon>
        <taxon>Bacteroidota</taxon>
        <taxon>Bacteroidia</taxon>
        <taxon>Bacteroidales</taxon>
        <taxon>Bacteroidaceae</taxon>
        <taxon>Bacteroides</taxon>
    </lineage>
</organism>
<dbReference type="EC" id="2.7.13.3"/>
<dbReference type="EMBL" id="S59000">
    <property type="protein sequence ID" value="AAB26173.2"/>
    <property type="molecule type" value="Genomic_DNA"/>
</dbReference>
<dbReference type="EMBL" id="AP006841">
    <property type="protein sequence ID" value="BAD50607.1"/>
    <property type="molecule type" value="Genomic_DNA"/>
</dbReference>
<dbReference type="PIR" id="S33661">
    <property type="entry name" value="S33661"/>
</dbReference>
<dbReference type="RefSeq" id="WP_005790953.1">
    <property type="nucleotide sequence ID" value="NZ_UYXF01000018.1"/>
</dbReference>
<dbReference type="RefSeq" id="YP_101141.1">
    <property type="nucleotide sequence ID" value="NC_006347.1"/>
</dbReference>
<dbReference type="SMR" id="Q08408"/>
<dbReference type="STRING" id="295405.BF3865"/>
<dbReference type="KEGG" id="bfr:BF3865"/>
<dbReference type="PATRIC" id="fig|295405.11.peg.3710"/>
<dbReference type="HOGENOM" id="CLU_026375_1_0_10"/>
<dbReference type="OrthoDB" id="1933776at2"/>
<dbReference type="BRENDA" id="2.7.13.3">
    <property type="organism ID" value="755"/>
</dbReference>
<dbReference type="Proteomes" id="UP000002197">
    <property type="component" value="Chromosome"/>
</dbReference>
<dbReference type="GO" id="GO:0016020">
    <property type="term" value="C:membrane"/>
    <property type="evidence" value="ECO:0000303"/>
    <property type="project" value="UniProtKB"/>
</dbReference>
<dbReference type="GO" id="GO:0005886">
    <property type="term" value="C:plasma membrane"/>
    <property type="evidence" value="ECO:0007669"/>
    <property type="project" value="UniProtKB-SubCell"/>
</dbReference>
<dbReference type="GO" id="GO:0005524">
    <property type="term" value="F:ATP binding"/>
    <property type="evidence" value="ECO:0007669"/>
    <property type="project" value="UniProtKB-KW"/>
</dbReference>
<dbReference type="GO" id="GO:0000156">
    <property type="term" value="F:phosphorelay response regulator activity"/>
    <property type="evidence" value="ECO:0007669"/>
    <property type="project" value="TreeGrafter"/>
</dbReference>
<dbReference type="GO" id="GO:0000155">
    <property type="term" value="F:phosphorelay sensor kinase activity"/>
    <property type="evidence" value="ECO:0000303"/>
    <property type="project" value="UniProtKB"/>
</dbReference>
<dbReference type="GO" id="GO:0030295">
    <property type="term" value="F:protein kinase activator activity"/>
    <property type="evidence" value="ECO:0007669"/>
    <property type="project" value="TreeGrafter"/>
</dbReference>
<dbReference type="GO" id="GO:0007234">
    <property type="term" value="P:osmosensory signaling via phosphorelay pathway"/>
    <property type="evidence" value="ECO:0007669"/>
    <property type="project" value="TreeGrafter"/>
</dbReference>
<dbReference type="GO" id="GO:0000160">
    <property type="term" value="P:phosphorelay signal transduction system"/>
    <property type="evidence" value="ECO:0000303"/>
    <property type="project" value="UniProtKB"/>
</dbReference>
<dbReference type="CDD" id="cd00075">
    <property type="entry name" value="HATPase"/>
    <property type="match status" value="1"/>
</dbReference>
<dbReference type="CDD" id="cd00082">
    <property type="entry name" value="HisKA"/>
    <property type="match status" value="1"/>
</dbReference>
<dbReference type="FunFam" id="1.10.287.130:FF:000017">
    <property type="entry name" value="Two-component sensor histidine kinase"/>
    <property type="match status" value="1"/>
</dbReference>
<dbReference type="FunFam" id="3.30.565.10:FF:000059">
    <property type="entry name" value="Two-component sensor histidine kinase"/>
    <property type="match status" value="1"/>
</dbReference>
<dbReference type="Gene3D" id="1.10.287.130">
    <property type="match status" value="1"/>
</dbReference>
<dbReference type="Gene3D" id="3.30.565.10">
    <property type="entry name" value="Histidine kinase-like ATPase, C-terminal domain"/>
    <property type="match status" value="1"/>
</dbReference>
<dbReference type="InterPro" id="IPR036890">
    <property type="entry name" value="HATPase_C_sf"/>
</dbReference>
<dbReference type="InterPro" id="IPR005467">
    <property type="entry name" value="His_kinase_dom"/>
</dbReference>
<dbReference type="InterPro" id="IPR003661">
    <property type="entry name" value="HisK_dim/P_dom"/>
</dbReference>
<dbReference type="InterPro" id="IPR036097">
    <property type="entry name" value="HisK_dim/P_sf"/>
</dbReference>
<dbReference type="InterPro" id="IPR052545">
    <property type="entry name" value="Light-responsive_reg"/>
</dbReference>
<dbReference type="InterPro" id="IPR004358">
    <property type="entry name" value="Sig_transdc_His_kin-like_C"/>
</dbReference>
<dbReference type="PANTHER" id="PTHR42878:SF13">
    <property type="entry name" value="HISTIDINE KINASE"/>
    <property type="match status" value="1"/>
</dbReference>
<dbReference type="PANTHER" id="PTHR42878">
    <property type="entry name" value="TWO-COMPONENT HISTIDINE KINASE"/>
    <property type="match status" value="1"/>
</dbReference>
<dbReference type="Pfam" id="PF02518">
    <property type="entry name" value="HATPase_c"/>
    <property type="match status" value="1"/>
</dbReference>
<dbReference type="Pfam" id="PF00512">
    <property type="entry name" value="HisKA"/>
    <property type="match status" value="1"/>
</dbReference>
<dbReference type="PRINTS" id="PR00344">
    <property type="entry name" value="BCTRLSENSOR"/>
</dbReference>
<dbReference type="SMART" id="SM00387">
    <property type="entry name" value="HATPase_c"/>
    <property type="match status" value="1"/>
</dbReference>
<dbReference type="SMART" id="SM00388">
    <property type="entry name" value="HisKA"/>
    <property type="match status" value="1"/>
</dbReference>
<dbReference type="SUPFAM" id="SSF55874">
    <property type="entry name" value="ATPase domain of HSP90 chaperone/DNA topoisomerase II/histidine kinase"/>
    <property type="match status" value="1"/>
</dbReference>
<dbReference type="SUPFAM" id="SSF47384">
    <property type="entry name" value="Homodimeric domain of signal transducing histidine kinase"/>
    <property type="match status" value="1"/>
</dbReference>
<dbReference type="PROSITE" id="PS50109">
    <property type="entry name" value="HIS_KIN"/>
    <property type="match status" value="1"/>
</dbReference>
<sequence>MKKSTIWILGIIMGLSFLSLLYLQVSYIEEMVKMRKEQFNTSVRNALFQVSKDVEYDETQRWLLEDITEAERRALAQSSSTTEQKNGLIQQSERYRFKSPDGTLYSEFELKMITTEPSKVPKAMISERHGRNTIPQTSRSLTDAIKNRYMYQRFLLDDVALRMIYKASDKSIGERVNFKKLDNYLKSNFINNGVELLYHFSVIDKDGREVYRCSDYEDGGSEDSYTQPLFQNDPPAKMSIVKVHFPGKKDYIFDSVSFMIPSMIFTIVLLITFIFTIYIVFRQKKLTEMKNDFINNMTHEFKTPISTISLAAQMLKDPAVGKSPQMFQHISGVINDETKRLRFQVEKVLQMSMFDRQKATLKMKELDANELITGVINTFALKVERYNGKITSNLEATNPVIFADEMHITNVIFNLMDNAVKYKKPEEDLVLNVRTWNEPGKLMISIQDNGIGIKKENLKKVFDKFYRVHTGNLHDVKGFGLGLAYVKKIIQDHKGTIRAESELNVGTKFIIALPLLKND</sequence>